<accession>B3E2J9</accession>
<dbReference type="EC" id="2.3.1.274" evidence="1"/>
<dbReference type="EMBL" id="CP001089">
    <property type="protein sequence ID" value="ACD95656.1"/>
    <property type="molecule type" value="Genomic_DNA"/>
</dbReference>
<dbReference type="RefSeq" id="WP_012469995.1">
    <property type="nucleotide sequence ID" value="NC_010814.1"/>
</dbReference>
<dbReference type="SMR" id="B3E2J9"/>
<dbReference type="STRING" id="398767.Glov_1940"/>
<dbReference type="KEGG" id="glo:Glov_1940"/>
<dbReference type="eggNOG" id="COG0416">
    <property type="taxonomic scope" value="Bacteria"/>
</dbReference>
<dbReference type="HOGENOM" id="CLU_039379_1_1_7"/>
<dbReference type="OrthoDB" id="9806408at2"/>
<dbReference type="UniPathway" id="UPA00085"/>
<dbReference type="Proteomes" id="UP000002420">
    <property type="component" value="Chromosome"/>
</dbReference>
<dbReference type="GO" id="GO:0005737">
    <property type="term" value="C:cytoplasm"/>
    <property type="evidence" value="ECO:0007669"/>
    <property type="project" value="UniProtKB-SubCell"/>
</dbReference>
<dbReference type="GO" id="GO:0043811">
    <property type="term" value="F:phosphate:acyl-[acyl carrier protein] acyltransferase activity"/>
    <property type="evidence" value="ECO:0007669"/>
    <property type="project" value="UniProtKB-UniRule"/>
</dbReference>
<dbReference type="GO" id="GO:0006633">
    <property type="term" value="P:fatty acid biosynthetic process"/>
    <property type="evidence" value="ECO:0007669"/>
    <property type="project" value="UniProtKB-UniRule"/>
</dbReference>
<dbReference type="GO" id="GO:0008654">
    <property type="term" value="P:phospholipid biosynthetic process"/>
    <property type="evidence" value="ECO:0007669"/>
    <property type="project" value="UniProtKB-KW"/>
</dbReference>
<dbReference type="Gene3D" id="3.40.718.10">
    <property type="entry name" value="Isopropylmalate Dehydrogenase"/>
    <property type="match status" value="1"/>
</dbReference>
<dbReference type="HAMAP" id="MF_00019">
    <property type="entry name" value="PlsX"/>
    <property type="match status" value="1"/>
</dbReference>
<dbReference type="InterPro" id="IPR003664">
    <property type="entry name" value="FA_synthesis"/>
</dbReference>
<dbReference type="InterPro" id="IPR012281">
    <property type="entry name" value="Phospholipid_synth_PlsX-like"/>
</dbReference>
<dbReference type="NCBIfam" id="TIGR00182">
    <property type="entry name" value="plsX"/>
    <property type="match status" value="1"/>
</dbReference>
<dbReference type="PANTHER" id="PTHR30100">
    <property type="entry name" value="FATTY ACID/PHOSPHOLIPID SYNTHESIS PROTEIN PLSX"/>
    <property type="match status" value="1"/>
</dbReference>
<dbReference type="PANTHER" id="PTHR30100:SF1">
    <property type="entry name" value="PHOSPHATE ACYLTRANSFERASE"/>
    <property type="match status" value="1"/>
</dbReference>
<dbReference type="Pfam" id="PF02504">
    <property type="entry name" value="FA_synthesis"/>
    <property type="match status" value="1"/>
</dbReference>
<dbReference type="PIRSF" id="PIRSF002465">
    <property type="entry name" value="Phsphlp_syn_PlsX"/>
    <property type="match status" value="1"/>
</dbReference>
<dbReference type="SUPFAM" id="SSF53659">
    <property type="entry name" value="Isocitrate/Isopropylmalate dehydrogenase-like"/>
    <property type="match status" value="1"/>
</dbReference>
<protein>
    <recommendedName>
        <fullName evidence="1">Phosphate acyltransferase</fullName>
        <ecNumber evidence="1">2.3.1.274</ecNumber>
    </recommendedName>
    <alternativeName>
        <fullName evidence="1">Acyl-ACP phosphotransacylase</fullName>
    </alternativeName>
    <alternativeName>
        <fullName evidence="1">Acyl-[acyl-carrier-protein]--phosphate acyltransferase</fullName>
    </alternativeName>
    <alternativeName>
        <fullName evidence="1">Phosphate-acyl-ACP acyltransferase</fullName>
    </alternativeName>
</protein>
<keyword id="KW-0963">Cytoplasm</keyword>
<keyword id="KW-0444">Lipid biosynthesis</keyword>
<keyword id="KW-0443">Lipid metabolism</keyword>
<keyword id="KW-0594">Phospholipid biosynthesis</keyword>
<keyword id="KW-1208">Phospholipid metabolism</keyword>
<keyword id="KW-1185">Reference proteome</keyword>
<keyword id="KW-0808">Transferase</keyword>
<gene>
    <name evidence="1" type="primary">plsX</name>
    <name type="ordered locus">Glov_1940</name>
</gene>
<proteinExistence type="inferred from homology"/>
<feature type="chain" id="PRO_1000089910" description="Phosphate acyltransferase">
    <location>
        <begin position="1"/>
        <end position="345"/>
    </location>
</feature>
<comment type="function">
    <text evidence="1">Catalyzes the reversible formation of acyl-phosphate (acyl-PO(4)) from acyl-[acyl-carrier-protein] (acyl-ACP). This enzyme utilizes acyl-ACP as fatty acyl donor, but not acyl-CoA.</text>
</comment>
<comment type="catalytic activity">
    <reaction evidence="1">
        <text>a fatty acyl-[ACP] + phosphate = an acyl phosphate + holo-[ACP]</text>
        <dbReference type="Rhea" id="RHEA:42292"/>
        <dbReference type="Rhea" id="RHEA-COMP:9685"/>
        <dbReference type="Rhea" id="RHEA-COMP:14125"/>
        <dbReference type="ChEBI" id="CHEBI:43474"/>
        <dbReference type="ChEBI" id="CHEBI:59918"/>
        <dbReference type="ChEBI" id="CHEBI:64479"/>
        <dbReference type="ChEBI" id="CHEBI:138651"/>
        <dbReference type="EC" id="2.3.1.274"/>
    </reaction>
</comment>
<comment type="pathway">
    <text evidence="1">Lipid metabolism; phospholipid metabolism.</text>
</comment>
<comment type="subunit">
    <text evidence="1">Homodimer. Probably interacts with PlsY.</text>
</comment>
<comment type="subcellular location">
    <subcellularLocation>
        <location evidence="1">Cytoplasm</location>
    </subcellularLocation>
    <text evidence="1">Associated with the membrane possibly through PlsY.</text>
</comment>
<comment type="similarity">
    <text evidence="1">Belongs to the PlsX family.</text>
</comment>
<reference key="1">
    <citation type="submission" date="2008-05" db="EMBL/GenBank/DDBJ databases">
        <title>Complete sequence of chromosome of Geobacter lovleyi SZ.</title>
        <authorList>
            <consortium name="US DOE Joint Genome Institute"/>
            <person name="Lucas S."/>
            <person name="Copeland A."/>
            <person name="Lapidus A."/>
            <person name="Glavina del Rio T."/>
            <person name="Dalin E."/>
            <person name="Tice H."/>
            <person name="Bruce D."/>
            <person name="Goodwin L."/>
            <person name="Pitluck S."/>
            <person name="Chertkov O."/>
            <person name="Meincke L."/>
            <person name="Brettin T."/>
            <person name="Detter J.C."/>
            <person name="Han C."/>
            <person name="Tapia R."/>
            <person name="Kuske C.R."/>
            <person name="Schmutz J."/>
            <person name="Larimer F."/>
            <person name="Land M."/>
            <person name="Hauser L."/>
            <person name="Kyrpides N."/>
            <person name="Mikhailova N."/>
            <person name="Sung Y."/>
            <person name="Fletcher K.E."/>
            <person name="Ritalahti K.M."/>
            <person name="Loeffler F.E."/>
            <person name="Richardson P."/>
        </authorList>
    </citation>
    <scope>NUCLEOTIDE SEQUENCE [LARGE SCALE GENOMIC DNA]</scope>
    <source>
        <strain>ATCC BAA-1151 / DSM 17278 / SZ</strain>
    </source>
</reference>
<sequence length="345" mass="36607">MRVAVDAMGGDNAPAIEVEGAVAASRQYGIPIILVGDEDRLRQELDHHAASGLDITIHHASEVVGMHDSASDAVRKKRNSSVRLAFELVKDGQACAAVSAGNSGATMAAGMFVLKRISGIERPAIAQVFPTLEGKTLVLDVGGNVDCKASHLVQFAIMGQVYAKHALGIPNPRIGLLSNGEEDSKGNELTRETNAILRQTSLNYAGYVEGRDIFKGTVEVVVCDGFVGNVVLKLSEGLAEATGTMLKREIMGDMIAKMGYLFMRGAFKRFKKTVDYAEYGGAPLIGINGVGMICHGGSNAKAIKNAIRFAHDYATSGVTQRIAEKLSENYGALFPRTGQSVPPVS</sequence>
<evidence type="ECO:0000255" key="1">
    <source>
        <dbReference type="HAMAP-Rule" id="MF_00019"/>
    </source>
</evidence>
<organism>
    <name type="scientific">Trichlorobacter lovleyi (strain ATCC BAA-1151 / DSM 17278 / SZ)</name>
    <name type="common">Geobacter lovleyi</name>
    <dbReference type="NCBI Taxonomy" id="398767"/>
    <lineage>
        <taxon>Bacteria</taxon>
        <taxon>Pseudomonadati</taxon>
        <taxon>Thermodesulfobacteriota</taxon>
        <taxon>Desulfuromonadia</taxon>
        <taxon>Geobacterales</taxon>
        <taxon>Geobacteraceae</taxon>
        <taxon>Trichlorobacter</taxon>
    </lineage>
</organism>
<name>PLSX_TRIL1</name>